<protein>
    <recommendedName>
        <fullName>Nuclear cap-binding protein subunit 1</fullName>
    </recommendedName>
    <alternativeName>
        <fullName>80 kDa nuclear cap-binding protein</fullName>
        <shortName>CBP80</shortName>
        <shortName>NCBP 80 kDa subunit</shortName>
    </alternativeName>
</protein>
<sequence length="867" mass="98890">MSAGWRTLLLRIGDRCPEYGGSADHKEHIETCYGVLCREYEHSKDAMFEFLLQCADQLPHKIPFFGVLIGLINLENEDFSKGIVDTTHANLQDALHNENRDRIRILLRFLCGLMCSKVVLPNSIIETFEALLSSAATILDEETGNPSWQPRADFYVYCILASLPWGGSELFEQVPDEFERVLVGIQSYISIRRHFDDIAFSVFETDEGNSPNKKDFIEDLWERIQVLSRNGWKVKSVPKPHLSFEAQLVAGVSHRFSPISCPPPTISQSSSEIVKGQEKHEADLKYPQRLRRLHIFPTNKAENMQPVDRFVVEECILDVLLFFNGCRKECAFYLVSLPVPFRYEYLMAETIFSQLLLLPNPPFRPIYYTLVIIDLCKALPGAFPSVVVGAVHALFDRISNMDMECRTRLILWFSHHLSNFQFIWPWQEWAYVKDLPKWAPQRVFVQEVLEREIRLSYFDKIKQSIEDAVELEELLPPKAGPNFRYHSDEGKESTDGHRLSKELVAMVRGRKTQGDIISWVDEKIIPVNGAKFALDVVSQTLLDIGSKSFTHLITVLERYGQIISKLCPNEEMQLLLMDEVSAYWKNSTQMIAIAIDRMMGYRLLSNLAIVKWVFSPANVDQFHVSDRPWEILRNAVSKTYNRIFDLRKEIQTLRKGLQAAKEASEKAARELEEAKSIIEIVDGQPVPSENPGRLRRLQARADKAKEGEVTTEESLEAKEALLARGLEESKELLRLLFKSFVEVLTERLPPISADGDVPNLRAGDPNVNSSARDPEATTMEIDNENGGDNDSQLNGQNKKISHNVGELEQWCLCTLGYLKSFSRQYATEIWSHIAMLDQEIFVGNIHPLIRKAAFSGLCRPTSEGSHL</sequence>
<dbReference type="EMBL" id="AY017415">
    <property type="protein sequence ID" value="AAG54079.1"/>
    <property type="status" value="ALT_FRAME"/>
    <property type="molecule type" value="mRNA"/>
</dbReference>
<dbReference type="EMBL" id="DP000009">
    <property type="protein sequence ID" value="ABF95910.1"/>
    <property type="molecule type" value="Genomic_DNA"/>
</dbReference>
<dbReference type="EMBL" id="AP008209">
    <property type="protein sequence ID" value="BAF12011.1"/>
    <property type="molecule type" value="Genomic_DNA"/>
</dbReference>
<dbReference type="EMBL" id="AP014959">
    <property type="protein sequence ID" value="BAS84169.1"/>
    <property type="molecule type" value="Genomic_DNA"/>
</dbReference>
<dbReference type="EMBL" id="CM000140">
    <property type="protein sequence ID" value="EEE59051.1"/>
    <property type="status" value="ALT_SEQ"/>
    <property type="molecule type" value="Genomic_DNA"/>
</dbReference>
<dbReference type="EMBL" id="AK102852">
    <property type="status" value="NOT_ANNOTATED_CDS"/>
    <property type="molecule type" value="mRNA"/>
</dbReference>
<dbReference type="SMR" id="Q10LJ0"/>
<dbReference type="FunCoup" id="Q10LJ0">
    <property type="interactions" value="3494"/>
</dbReference>
<dbReference type="STRING" id="39947.Q10LJ0"/>
<dbReference type="PaxDb" id="39947-Q10LJ0"/>
<dbReference type="EnsemblPlants" id="Os03t0347200-01">
    <property type="protein sequence ID" value="Os03t0347200-01"/>
    <property type="gene ID" value="Os03g0347200"/>
</dbReference>
<dbReference type="Gramene" id="Os03t0347200-01">
    <property type="protein sequence ID" value="Os03t0347200-01"/>
    <property type="gene ID" value="Os03g0347200"/>
</dbReference>
<dbReference type="KEGG" id="dosa:Os03g0347200"/>
<dbReference type="eggNOG" id="KOG1104">
    <property type="taxonomic scope" value="Eukaryota"/>
</dbReference>
<dbReference type="HOGENOM" id="CLU_013207_1_0_1"/>
<dbReference type="InParanoid" id="Q10LJ0"/>
<dbReference type="OMA" id="CAAEGLM"/>
<dbReference type="Proteomes" id="UP000000763">
    <property type="component" value="Chromosome 3"/>
</dbReference>
<dbReference type="Proteomes" id="UP000007752">
    <property type="component" value="Chromosome 3"/>
</dbReference>
<dbReference type="Proteomes" id="UP000059680">
    <property type="component" value="Chromosome 3"/>
</dbReference>
<dbReference type="ExpressionAtlas" id="Q10LJ0">
    <property type="expression patterns" value="baseline and differential"/>
</dbReference>
<dbReference type="GO" id="GO:0005737">
    <property type="term" value="C:cytoplasm"/>
    <property type="evidence" value="ECO:0007669"/>
    <property type="project" value="UniProtKB-SubCell"/>
</dbReference>
<dbReference type="GO" id="GO:0005846">
    <property type="term" value="C:nuclear cap binding complex"/>
    <property type="evidence" value="ECO:0000318"/>
    <property type="project" value="GO_Central"/>
</dbReference>
<dbReference type="GO" id="GO:0005634">
    <property type="term" value="C:nucleus"/>
    <property type="evidence" value="ECO:0000318"/>
    <property type="project" value="GO_Central"/>
</dbReference>
<dbReference type="GO" id="GO:0003729">
    <property type="term" value="F:mRNA binding"/>
    <property type="evidence" value="ECO:0000318"/>
    <property type="project" value="GO_Central"/>
</dbReference>
<dbReference type="GO" id="GO:0000339">
    <property type="term" value="F:RNA cap binding"/>
    <property type="evidence" value="ECO:0000318"/>
    <property type="project" value="GO_Central"/>
</dbReference>
<dbReference type="GO" id="GO:0006370">
    <property type="term" value="P:7-methylguanosine mRNA capping"/>
    <property type="evidence" value="ECO:0007669"/>
    <property type="project" value="UniProtKB-KW"/>
</dbReference>
<dbReference type="GO" id="GO:1901527">
    <property type="term" value="P:abscisic acid-activated signaling pathway involved in stomatal movement"/>
    <property type="evidence" value="ECO:0007669"/>
    <property type="project" value="EnsemblPlants"/>
</dbReference>
<dbReference type="GO" id="GO:0000380">
    <property type="term" value="P:alternative mRNA splicing, via spliceosome"/>
    <property type="evidence" value="ECO:0007669"/>
    <property type="project" value="EnsemblPlants"/>
</dbReference>
<dbReference type="GO" id="GO:0051607">
    <property type="term" value="P:defense response to virus"/>
    <property type="evidence" value="ECO:0007669"/>
    <property type="project" value="EnsemblPlants"/>
</dbReference>
<dbReference type="GO" id="GO:0048574">
    <property type="term" value="P:long-day photoperiodism, flowering"/>
    <property type="evidence" value="ECO:0007669"/>
    <property type="project" value="EnsemblPlants"/>
</dbReference>
<dbReference type="GO" id="GO:0006406">
    <property type="term" value="P:mRNA export from nucleus"/>
    <property type="evidence" value="ECO:0007669"/>
    <property type="project" value="InterPro"/>
</dbReference>
<dbReference type="GO" id="GO:0000184">
    <property type="term" value="P:nuclear-transcribed mRNA catabolic process, nonsense-mediated decay"/>
    <property type="evidence" value="ECO:0000318"/>
    <property type="project" value="GO_Central"/>
</dbReference>
<dbReference type="GO" id="GO:0031053">
    <property type="term" value="P:primary miRNA processing"/>
    <property type="evidence" value="ECO:0007669"/>
    <property type="project" value="EnsemblPlants"/>
</dbReference>
<dbReference type="GO" id="GO:0000394">
    <property type="term" value="P:RNA splicing, via endonucleolytic cleavage and ligation"/>
    <property type="evidence" value="ECO:0007669"/>
    <property type="project" value="EnsemblPlants"/>
</dbReference>
<dbReference type="FunFam" id="1.25.40.180:FF:000029">
    <property type="entry name" value="Nuclear cap-binding protein"/>
    <property type="match status" value="1"/>
</dbReference>
<dbReference type="FunFam" id="1.25.40.180:FF:000040">
    <property type="entry name" value="Nuclear cap-binding protein subunit 1"/>
    <property type="match status" value="1"/>
</dbReference>
<dbReference type="Gene3D" id="1.25.40.180">
    <property type="match status" value="3"/>
</dbReference>
<dbReference type="InterPro" id="IPR016024">
    <property type="entry name" value="ARM-type_fold"/>
</dbReference>
<dbReference type="InterPro" id="IPR027159">
    <property type="entry name" value="CBP80"/>
</dbReference>
<dbReference type="InterPro" id="IPR015172">
    <property type="entry name" value="MIF4G-like_typ-1"/>
</dbReference>
<dbReference type="InterPro" id="IPR015174">
    <property type="entry name" value="MIF4G-like_typ-2"/>
</dbReference>
<dbReference type="InterPro" id="IPR003890">
    <property type="entry name" value="MIF4G-like_typ-3"/>
</dbReference>
<dbReference type="PANTHER" id="PTHR12412">
    <property type="entry name" value="CAP BINDING PROTEIN"/>
    <property type="match status" value="1"/>
</dbReference>
<dbReference type="PANTHER" id="PTHR12412:SF2">
    <property type="entry name" value="NUCLEAR CAP-BINDING PROTEIN SUBUNIT 1"/>
    <property type="match status" value="1"/>
</dbReference>
<dbReference type="Pfam" id="PF02854">
    <property type="entry name" value="MIF4G"/>
    <property type="match status" value="1"/>
</dbReference>
<dbReference type="Pfam" id="PF09088">
    <property type="entry name" value="MIF4G_like"/>
    <property type="match status" value="1"/>
</dbReference>
<dbReference type="Pfam" id="PF09090">
    <property type="entry name" value="MIF4G_like_2"/>
    <property type="match status" value="1"/>
</dbReference>
<dbReference type="SMART" id="SM00543">
    <property type="entry name" value="MIF4G"/>
    <property type="match status" value="1"/>
</dbReference>
<dbReference type="SUPFAM" id="SSF48371">
    <property type="entry name" value="ARM repeat"/>
    <property type="match status" value="3"/>
</dbReference>
<proteinExistence type="evidence at transcript level"/>
<feature type="chain" id="PRO_0000385247" description="Nuclear cap-binding protein subunit 1">
    <location>
        <begin position="1"/>
        <end position="867"/>
    </location>
</feature>
<feature type="domain" description="MIF4G">
    <location>
        <begin position="9"/>
        <end position="228"/>
    </location>
</feature>
<feature type="region of interest" description="Disordered" evidence="2">
    <location>
        <begin position="752"/>
        <end position="797"/>
    </location>
</feature>
<feature type="compositionally biased region" description="Polar residues" evidence="2">
    <location>
        <begin position="788"/>
        <end position="797"/>
    </location>
</feature>
<feature type="sequence conflict" description="In Ref. 1; AAG54079." evidence="3" ref="1">
    <original>A</original>
    <variation>V</variation>
    <location>
        <position position="23"/>
    </location>
</feature>
<organism>
    <name type="scientific">Oryza sativa subsp. japonica</name>
    <name type="common">Rice</name>
    <dbReference type="NCBI Taxonomy" id="39947"/>
    <lineage>
        <taxon>Eukaryota</taxon>
        <taxon>Viridiplantae</taxon>
        <taxon>Streptophyta</taxon>
        <taxon>Embryophyta</taxon>
        <taxon>Tracheophyta</taxon>
        <taxon>Spermatophyta</taxon>
        <taxon>Magnoliopsida</taxon>
        <taxon>Liliopsida</taxon>
        <taxon>Poales</taxon>
        <taxon>Poaceae</taxon>
        <taxon>BOP clade</taxon>
        <taxon>Oryzoideae</taxon>
        <taxon>Oryzeae</taxon>
        <taxon>Oryzinae</taxon>
        <taxon>Oryza</taxon>
        <taxon>Oryza sativa</taxon>
    </lineage>
</organism>
<gene>
    <name type="primary">ABH1</name>
    <name type="synonym">CBP80</name>
    <name type="ordered locus">Os03g0347200</name>
    <name type="ordered locus">LOC_Os03g22570</name>
    <name type="ORF">OsJ_10823</name>
</gene>
<comment type="function">
    <text evidence="1">Component of the cap-binding complex (CBC), which binds cotranscriptionally to the 5'-cap of pre-mRNAs and is involved in various processes such as pre-mRNA splicing and RNA-mediated gene silencing (RNAi) by microRNAs (miRNAs). The CBC complex is involved in miRNA-mediated RNA interference and is required for primary miRNA processing. In the CBC complex, ABH1/CBP80 does not bind directly capped RNAs (m7GpppG-capped RNA) but is required to stabilize the movement of the N-terminal loop of CBP20 and lock the CBC into a high affinity cap-binding state with the cap structure (By similarity).</text>
</comment>
<comment type="subunit">
    <text>Component of the nuclear cap-binding complex (CBC), a heterodimer composed of ABH1/CBP80 and CBP20 that interacts with m7GpppG-capped RNA.</text>
</comment>
<comment type="subcellular location">
    <subcellularLocation>
        <location evidence="1">Nucleus</location>
    </subcellularLocation>
    <subcellularLocation>
        <location evidence="1">Cytoplasm</location>
    </subcellularLocation>
    <text evidence="1">Predominantly nuclear.</text>
</comment>
<comment type="similarity">
    <text evidence="3">Belongs to the NCBP1 family.</text>
</comment>
<comment type="sequence caution" evidence="3">
    <conflict type="frameshift">
        <sequence resource="EMBL-CDS" id="AAG54079"/>
    </conflict>
</comment>
<comment type="sequence caution" evidence="3">
    <conflict type="frameshift">
        <sequence resource="EMBL" id="AK102852"/>
    </conflict>
</comment>
<comment type="sequence caution" evidence="3">
    <conflict type="erroneous gene model prediction">
        <sequence resource="EMBL-CDS" id="EEE59051"/>
    </conflict>
</comment>
<keyword id="KW-0963">Cytoplasm</keyword>
<keyword id="KW-0506">mRNA capping</keyword>
<keyword id="KW-0507">mRNA processing</keyword>
<keyword id="KW-0508">mRNA splicing</keyword>
<keyword id="KW-0539">Nucleus</keyword>
<keyword id="KW-1185">Reference proteome</keyword>
<keyword id="KW-0943">RNA-mediated gene silencing</keyword>
<evidence type="ECO:0000250" key="1"/>
<evidence type="ECO:0000256" key="2">
    <source>
        <dbReference type="SAM" id="MobiDB-lite"/>
    </source>
</evidence>
<evidence type="ECO:0000305" key="3"/>
<name>NCBP1_ORYSJ</name>
<reference key="1">
    <citation type="submission" date="2001-01" db="EMBL/GenBank/DDBJ databases">
        <title>Molecular characterization of Oryza sativa CBP80.</title>
        <authorList>
            <person name="Derba M."/>
            <person name="Kmieciak M."/>
            <person name="Jarmolowski A."/>
        </authorList>
    </citation>
    <scope>NUCLEOTIDE SEQUENCE [MRNA]</scope>
    <source>
        <strain>cv. Nipponbare</strain>
    </source>
</reference>
<reference key="2">
    <citation type="journal article" date="2005" name="Genome Res.">
        <title>Sequence, annotation, and analysis of synteny between rice chromosome 3 and diverged grass species.</title>
        <authorList>
            <consortium name="The rice chromosome 3 sequencing consortium"/>
            <person name="Buell C.R."/>
            <person name="Yuan Q."/>
            <person name="Ouyang S."/>
            <person name="Liu J."/>
            <person name="Zhu W."/>
            <person name="Wang A."/>
            <person name="Maiti R."/>
            <person name="Haas B."/>
            <person name="Wortman J."/>
            <person name="Pertea M."/>
            <person name="Jones K.M."/>
            <person name="Kim M."/>
            <person name="Overton L."/>
            <person name="Tsitrin T."/>
            <person name="Fadrosh D."/>
            <person name="Bera J."/>
            <person name="Weaver B."/>
            <person name="Jin S."/>
            <person name="Johri S."/>
            <person name="Reardon M."/>
            <person name="Webb K."/>
            <person name="Hill J."/>
            <person name="Moffat K."/>
            <person name="Tallon L."/>
            <person name="Van Aken S."/>
            <person name="Lewis M."/>
            <person name="Utterback T."/>
            <person name="Feldblyum T."/>
            <person name="Zismann V."/>
            <person name="Iobst S."/>
            <person name="Hsiao J."/>
            <person name="de Vazeille A.R."/>
            <person name="Salzberg S.L."/>
            <person name="White O."/>
            <person name="Fraser C.M."/>
            <person name="Yu Y."/>
            <person name="Kim H."/>
            <person name="Rambo T."/>
            <person name="Currie J."/>
            <person name="Collura K."/>
            <person name="Kernodle-Thompson S."/>
            <person name="Wei F."/>
            <person name="Kudrna K."/>
            <person name="Ammiraju J.S.S."/>
            <person name="Luo M."/>
            <person name="Goicoechea J.L."/>
            <person name="Wing R.A."/>
            <person name="Henry D."/>
            <person name="Oates R."/>
            <person name="Palmer M."/>
            <person name="Pries G."/>
            <person name="Saski C."/>
            <person name="Simmons J."/>
            <person name="Soderlund C."/>
            <person name="Nelson W."/>
            <person name="de la Bastide M."/>
            <person name="Spiegel L."/>
            <person name="Nascimento L."/>
            <person name="Huang E."/>
            <person name="Preston R."/>
            <person name="Zutavern T."/>
            <person name="Palmer L."/>
            <person name="O'Shaughnessy A."/>
            <person name="Dike S."/>
            <person name="McCombie W.R."/>
            <person name="Minx P."/>
            <person name="Cordum H."/>
            <person name="Wilson R."/>
            <person name="Jin W."/>
            <person name="Lee H.R."/>
            <person name="Jiang J."/>
            <person name="Jackson S."/>
        </authorList>
    </citation>
    <scope>NUCLEOTIDE SEQUENCE [LARGE SCALE GENOMIC DNA]</scope>
    <source>
        <strain>cv. Nipponbare</strain>
    </source>
</reference>
<reference key="3">
    <citation type="journal article" date="2005" name="Nature">
        <title>The map-based sequence of the rice genome.</title>
        <authorList>
            <consortium name="International rice genome sequencing project (IRGSP)"/>
        </authorList>
    </citation>
    <scope>NUCLEOTIDE SEQUENCE [LARGE SCALE GENOMIC DNA]</scope>
    <source>
        <strain>cv. Nipponbare</strain>
    </source>
</reference>
<reference key="4">
    <citation type="journal article" date="2008" name="Nucleic Acids Res.">
        <title>The rice annotation project database (RAP-DB): 2008 update.</title>
        <authorList>
            <consortium name="The rice annotation project (RAP)"/>
        </authorList>
    </citation>
    <scope>GENOME REANNOTATION</scope>
    <source>
        <strain>cv. Nipponbare</strain>
    </source>
</reference>
<reference key="5">
    <citation type="journal article" date="2013" name="Rice">
        <title>Improvement of the Oryza sativa Nipponbare reference genome using next generation sequence and optical map data.</title>
        <authorList>
            <person name="Kawahara Y."/>
            <person name="de la Bastide M."/>
            <person name="Hamilton J.P."/>
            <person name="Kanamori H."/>
            <person name="McCombie W.R."/>
            <person name="Ouyang S."/>
            <person name="Schwartz D.C."/>
            <person name="Tanaka T."/>
            <person name="Wu J."/>
            <person name="Zhou S."/>
            <person name="Childs K.L."/>
            <person name="Davidson R.M."/>
            <person name="Lin H."/>
            <person name="Quesada-Ocampo L."/>
            <person name="Vaillancourt B."/>
            <person name="Sakai H."/>
            <person name="Lee S.S."/>
            <person name="Kim J."/>
            <person name="Numa H."/>
            <person name="Itoh T."/>
            <person name="Buell C.R."/>
            <person name="Matsumoto T."/>
        </authorList>
    </citation>
    <scope>GENOME REANNOTATION</scope>
    <source>
        <strain>cv. Nipponbare</strain>
    </source>
</reference>
<reference key="6">
    <citation type="journal article" date="2005" name="PLoS Biol.">
        <title>The genomes of Oryza sativa: a history of duplications.</title>
        <authorList>
            <person name="Yu J."/>
            <person name="Wang J."/>
            <person name="Lin W."/>
            <person name="Li S."/>
            <person name="Li H."/>
            <person name="Zhou J."/>
            <person name="Ni P."/>
            <person name="Dong W."/>
            <person name="Hu S."/>
            <person name="Zeng C."/>
            <person name="Zhang J."/>
            <person name="Zhang Y."/>
            <person name="Li R."/>
            <person name="Xu Z."/>
            <person name="Li S."/>
            <person name="Li X."/>
            <person name="Zheng H."/>
            <person name="Cong L."/>
            <person name="Lin L."/>
            <person name="Yin J."/>
            <person name="Geng J."/>
            <person name="Li G."/>
            <person name="Shi J."/>
            <person name="Liu J."/>
            <person name="Lv H."/>
            <person name="Li J."/>
            <person name="Wang J."/>
            <person name="Deng Y."/>
            <person name="Ran L."/>
            <person name="Shi X."/>
            <person name="Wang X."/>
            <person name="Wu Q."/>
            <person name="Li C."/>
            <person name="Ren X."/>
            <person name="Wang J."/>
            <person name="Wang X."/>
            <person name="Li D."/>
            <person name="Liu D."/>
            <person name="Zhang X."/>
            <person name="Ji Z."/>
            <person name="Zhao W."/>
            <person name="Sun Y."/>
            <person name="Zhang Z."/>
            <person name="Bao J."/>
            <person name="Han Y."/>
            <person name="Dong L."/>
            <person name="Ji J."/>
            <person name="Chen P."/>
            <person name="Wu S."/>
            <person name="Liu J."/>
            <person name="Xiao Y."/>
            <person name="Bu D."/>
            <person name="Tan J."/>
            <person name="Yang L."/>
            <person name="Ye C."/>
            <person name="Zhang J."/>
            <person name="Xu J."/>
            <person name="Zhou Y."/>
            <person name="Yu Y."/>
            <person name="Zhang B."/>
            <person name="Zhuang S."/>
            <person name="Wei H."/>
            <person name="Liu B."/>
            <person name="Lei M."/>
            <person name="Yu H."/>
            <person name="Li Y."/>
            <person name="Xu H."/>
            <person name="Wei S."/>
            <person name="He X."/>
            <person name="Fang L."/>
            <person name="Zhang Z."/>
            <person name="Zhang Y."/>
            <person name="Huang X."/>
            <person name="Su Z."/>
            <person name="Tong W."/>
            <person name="Li J."/>
            <person name="Tong Z."/>
            <person name="Li S."/>
            <person name="Ye J."/>
            <person name="Wang L."/>
            <person name="Fang L."/>
            <person name="Lei T."/>
            <person name="Chen C.-S."/>
            <person name="Chen H.-C."/>
            <person name="Xu Z."/>
            <person name="Li H."/>
            <person name="Huang H."/>
            <person name="Zhang F."/>
            <person name="Xu H."/>
            <person name="Li N."/>
            <person name="Zhao C."/>
            <person name="Li S."/>
            <person name="Dong L."/>
            <person name="Huang Y."/>
            <person name="Li L."/>
            <person name="Xi Y."/>
            <person name="Qi Q."/>
            <person name="Li W."/>
            <person name="Zhang B."/>
            <person name="Hu W."/>
            <person name="Zhang Y."/>
            <person name="Tian X."/>
            <person name="Jiao Y."/>
            <person name="Liang X."/>
            <person name="Jin J."/>
            <person name="Gao L."/>
            <person name="Zheng W."/>
            <person name="Hao B."/>
            <person name="Liu S.-M."/>
            <person name="Wang W."/>
            <person name="Yuan L."/>
            <person name="Cao M."/>
            <person name="McDermott J."/>
            <person name="Samudrala R."/>
            <person name="Wang J."/>
            <person name="Wong G.K.-S."/>
            <person name="Yang H."/>
        </authorList>
    </citation>
    <scope>NUCLEOTIDE SEQUENCE [LARGE SCALE GENOMIC DNA]</scope>
    <source>
        <strain>cv. Nipponbare</strain>
    </source>
</reference>
<reference key="7">
    <citation type="journal article" date="2003" name="Science">
        <title>Collection, mapping, and annotation of over 28,000 cDNA clones from japonica rice.</title>
        <authorList>
            <consortium name="The rice full-length cDNA consortium"/>
        </authorList>
    </citation>
    <scope>NUCLEOTIDE SEQUENCE [LARGE SCALE MRNA]</scope>
    <source>
        <strain>cv. Nipponbare</strain>
    </source>
</reference>
<accession>Q10LJ0</accession>
<accession>A0A0N7KH92</accession>
<accession>B9F8F3</accession>
<accession>Q9AWB3</accession>